<protein>
    <recommendedName>
        <fullName evidence="5">Delta-actitoxin-Avd2b 2</fullName>
        <shortName evidence="5">Delta-AITX-Avd2b 2</shortName>
    </recommendedName>
    <alternativeName>
        <fullName evidence="4">Av7</fullName>
    </alternativeName>
    <alternativeName>
        <fullName evidence="7">Neurotoxin 7</fullName>
    </alternativeName>
</protein>
<organism>
    <name type="scientific">Anemonia viridis</name>
    <name type="common">Snakelocks anemone</name>
    <dbReference type="NCBI Taxonomy" id="51769"/>
    <lineage>
        <taxon>Eukaryota</taxon>
        <taxon>Metazoa</taxon>
        <taxon>Cnidaria</taxon>
        <taxon>Anthozoa</taxon>
        <taxon>Hexacorallia</taxon>
        <taxon>Actiniaria</taxon>
        <taxon>Actiniidae</taxon>
        <taxon>Anemonia</taxon>
    </lineage>
</organism>
<comment type="function">
    <text evidence="3">Voltage-gated sodium channel (Nav) inhibitor. 1 uM completely inhibits insect voltage-gated sodium channel inactivation (DmNav1 from D.melanogaster).</text>
</comment>
<comment type="subcellular location">
    <subcellularLocation>
        <location evidence="6">Secreted</location>
    </subcellularLocation>
    <subcellularLocation>
        <location evidence="6">Nematocyst</location>
    </subcellularLocation>
</comment>
<comment type="similarity">
    <text evidence="6">Belongs to the sea anemone short toxin (type III) family.</text>
</comment>
<comment type="caution">
    <text evidence="6">Opinions are divided on whether Anemonia viridis (Forsskal, 1775) and Anemonia sulcata (Pennant, 1777) are separate species.</text>
</comment>
<sequence>MNRLLVFLMLGAAFMLVVSANDAYGDEPAFKDLNQGDESLGKRKSCCPCWLRGNCFWGQNCYPEGCSGPKV</sequence>
<reference key="1">
    <citation type="journal article" date="2009" name="J. Mol. Evol.">
        <title>Fusion and retrotransposition events in the evolution of the sea anemone Anemonia viridis neurotoxin genes.</title>
        <authorList>
            <person name="Moran Y."/>
            <person name="Weinberger H."/>
            <person name="Lazarus N."/>
            <person name="Gur M."/>
            <person name="Kahn R."/>
            <person name="Gordon D."/>
            <person name="Gurevitz M."/>
        </authorList>
    </citation>
    <scope>NUCLEOTIDE SEQUENCE [GENOMIC DNA]</scope>
    <scope>FUNCTION</scope>
    <source>
        <tissue>Ovary</tissue>
    </source>
</reference>
<reference key="2">
    <citation type="journal article" date="2012" name="Toxicon">
        <title>Development of a rational nomenclature for naming peptide and protein toxins from sea anemones.</title>
        <authorList>
            <person name="Oliveira J.S."/>
            <person name="Fuentes-Silva D."/>
            <person name="King G.F."/>
        </authorList>
    </citation>
    <scope>NOMENCLATURE</scope>
</reference>
<proteinExistence type="inferred from homology"/>
<feature type="signal peptide" evidence="2">
    <location>
        <begin position="1"/>
        <end position="20"/>
    </location>
</feature>
<feature type="propeptide" id="PRO_0000433693" evidence="1">
    <location>
        <begin position="21"/>
        <end position="41"/>
    </location>
</feature>
<feature type="peptide" id="PRO_5000461217" description="Delta-actitoxin-Avd2b 2">
    <location>
        <begin position="44"/>
        <end position="71"/>
    </location>
</feature>
<feature type="disulfide bond" evidence="1">
    <location>
        <begin position="46"/>
        <end position="61"/>
    </location>
</feature>
<feature type="disulfide bond" evidence="1">
    <location>
        <begin position="47"/>
        <end position="55"/>
    </location>
</feature>
<feature type="disulfide bond" evidence="1">
    <location>
        <begin position="49"/>
        <end position="66"/>
    </location>
</feature>
<dbReference type="EMBL" id="EU919727">
    <property type="protein sequence ID" value="ACL12302.1"/>
    <property type="molecule type" value="Genomic_DNA"/>
</dbReference>
<dbReference type="EMBL" id="EU919728">
    <property type="protein sequence ID" value="ACL12303.1"/>
    <property type="molecule type" value="Genomic_DNA"/>
</dbReference>
<dbReference type="GO" id="GO:0005576">
    <property type="term" value="C:extracellular region"/>
    <property type="evidence" value="ECO:0007669"/>
    <property type="project" value="UniProtKB-SubCell"/>
</dbReference>
<dbReference type="GO" id="GO:0042151">
    <property type="term" value="C:nematocyst"/>
    <property type="evidence" value="ECO:0007669"/>
    <property type="project" value="UniProtKB-SubCell"/>
</dbReference>
<dbReference type="GO" id="GO:0019871">
    <property type="term" value="F:sodium channel inhibitor activity"/>
    <property type="evidence" value="ECO:0007669"/>
    <property type="project" value="InterPro"/>
</dbReference>
<dbReference type="GO" id="GO:0090729">
    <property type="term" value="F:toxin activity"/>
    <property type="evidence" value="ECO:0007669"/>
    <property type="project" value="UniProtKB-KW"/>
</dbReference>
<dbReference type="InterPro" id="IPR012509">
    <property type="entry name" value="Neurotoxin_3_Anemonia"/>
</dbReference>
<dbReference type="InterPro" id="IPR036247">
    <property type="entry name" value="Neurotoxin_3_sf"/>
</dbReference>
<dbReference type="Pfam" id="PF08098">
    <property type="entry name" value="ATX_III"/>
    <property type="match status" value="1"/>
</dbReference>
<dbReference type="SUPFAM" id="SSF57419">
    <property type="entry name" value="Neurotoxin III (ATX III)"/>
    <property type="match status" value="1"/>
</dbReference>
<accession>C3TS04</accession>
<evidence type="ECO:0000250" key="1">
    <source>
        <dbReference type="UniProtKB" id="P01535"/>
    </source>
</evidence>
<evidence type="ECO:0000255" key="2"/>
<evidence type="ECO:0000269" key="3">
    <source>
    </source>
</evidence>
<evidence type="ECO:0000303" key="4">
    <source>
    </source>
</evidence>
<evidence type="ECO:0000303" key="5">
    <source>
    </source>
</evidence>
<evidence type="ECO:0000305" key="6"/>
<evidence type="ECO:0000312" key="7">
    <source>
        <dbReference type="EMBL" id="ACL12302.1"/>
    </source>
</evidence>
<name>STX72_ANEVI</name>
<keyword id="KW-1015">Disulfide bond</keyword>
<keyword id="KW-0872">Ion channel impairing toxin</keyword>
<keyword id="KW-0166">Nematocyst</keyword>
<keyword id="KW-0528">Neurotoxin</keyword>
<keyword id="KW-0964">Secreted</keyword>
<keyword id="KW-0732">Signal</keyword>
<keyword id="KW-0800">Toxin</keyword>
<keyword id="KW-0738">Voltage-gated sodium channel impairing toxin</keyword>